<reference key="1">
    <citation type="submission" date="2006-11" db="EMBL/GenBank/DDBJ databases">
        <title>Sequence of Campylobacter fetus subsp. fetus 82-40.</title>
        <authorList>
            <person name="Fouts D.E."/>
            <person name="Nelson K.E."/>
        </authorList>
    </citation>
    <scope>NUCLEOTIDE SEQUENCE [LARGE SCALE GENOMIC DNA]</scope>
    <source>
        <strain>82-40</strain>
    </source>
</reference>
<evidence type="ECO:0000255" key="1">
    <source>
        <dbReference type="HAMAP-Rule" id="MF_00012"/>
    </source>
</evidence>
<sequence>MRSDIIKDGYTRTPHRSLLRATGLKDDDFKKPFIGVANSFIEIIPGHFFLNKYSEILKDEIRKNGCVPFEFNTIGVDDGIAMGHEGMLYSLPSREIIANSVETVMNAHALDALVCIPNCDKIVPGMLMGALRVNVPTIFVSGGPMAAGVGAKGEALDLNSAFEAVGAYETKQIDEKELKFIECNACPSGGSCSGMFTANSMNTLCEAMGVALEGNGTVLALTSEREELIRKAARRICEIALDERYQIRNIINEKTIKNAMVVDMAMGGSSNTILHMLAISREAGYPLDIASLNDISRSVPHITKIAPSLPSVHMQDVAKAGGLSAVINEIAKFNSDLLSLDALTVSGESLGDRVKNAEILDESVIHTVQNAYSKVGGLAILFGNLAEQGCVIKAAGIIGSRQFSGKAVCFNSQDEAIKGISKGKVQKGDVVVLRYEGPKGGPGMQEMLSPTSLIVGRGLGADVALITDGRFSGATRGLSIGHVSPEAAEGGMIGLLKDGDIIDIDVDKFSINVRLSDTEIEARRKEWKYAGKPVNSRWLRQYQKLVTNASNGAILEA</sequence>
<organism>
    <name type="scientific">Campylobacter fetus subsp. fetus (strain 82-40)</name>
    <dbReference type="NCBI Taxonomy" id="360106"/>
    <lineage>
        <taxon>Bacteria</taxon>
        <taxon>Pseudomonadati</taxon>
        <taxon>Campylobacterota</taxon>
        <taxon>Epsilonproteobacteria</taxon>
        <taxon>Campylobacterales</taxon>
        <taxon>Campylobacteraceae</taxon>
        <taxon>Campylobacter</taxon>
    </lineage>
</organism>
<name>ILVD_CAMFF</name>
<feature type="chain" id="PRO_1000000970" description="Dihydroxy-acid dehydratase">
    <location>
        <begin position="1"/>
        <end position="557"/>
    </location>
</feature>
<feature type="active site" description="Proton acceptor" evidence="1">
    <location>
        <position position="472"/>
    </location>
</feature>
<feature type="binding site" evidence="1">
    <location>
        <position position="78"/>
    </location>
    <ligand>
        <name>Mg(2+)</name>
        <dbReference type="ChEBI" id="CHEBI:18420"/>
    </ligand>
</feature>
<feature type="binding site" evidence="1">
    <location>
        <position position="119"/>
    </location>
    <ligand>
        <name>[2Fe-2S] cluster</name>
        <dbReference type="ChEBI" id="CHEBI:190135"/>
    </ligand>
</feature>
<feature type="binding site" evidence="1">
    <location>
        <position position="120"/>
    </location>
    <ligand>
        <name>Mg(2+)</name>
        <dbReference type="ChEBI" id="CHEBI:18420"/>
    </ligand>
</feature>
<feature type="binding site" description="via carbamate group" evidence="1">
    <location>
        <position position="121"/>
    </location>
    <ligand>
        <name>Mg(2+)</name>
        <dbReference type="ChEBI" id="CHEBI:18420"/>
    </ligand>
</feature>
<feature type="binding site" evidence="1">
    <location>
        <position position="192"/>
    </location>
    <ligand>
        <name>[2Fe-2S] cluster</name>
        <dbReference type="ChEBI" id="CHEBI:190135"/>
    </ligand>
</feature>
<feature type="binding site" evidence="1">
    <location>
        <position position="446"/>
    </location>
    <ligand>
        <name>Mg(2+)</name>
        <dbReference type="ChEBI" id="CHEBI:18420"/>
    </ligand>
</feature>
<feature type="modified residue" description="N6-carboxylysine" evidence="1">
    <location>
        <position position="121"/>
    </location>
</feature>
<comment type="function">
    <text evidence="1">Functions in the biosynthesis of branched-chain amino acids. Catalyzes the dehydration of (2R,3R)-2,3-dihydroxy-3-methylpentanoate (2,3-dihydroxy-3-methylvalerate) into 2-oxo-3-methylpentanoate (2-oxo-3-methylvalerate) and of (2R)-2,3-dihydroxy-3-methylbutanoate (2,3-dihydroxyisovalerate) into 2-oxo-3-methylbutanoate (2-oxoisovalerate), the penultimate precursor to L-isoleucine and L-valine, respectively.</text>
</comment>
<comment type="catalytic activity">
    <reaction evidence="1">
        <text>(2R)-2,3-dihydroxy-3-methylbutanoate = 3-methyl-2-oxobutanoate + H2O</text>
        <dbReference type="Rhea" id="RHEA:24809"/>
        <dbReference type="ChEBI" id="CHEBI:11851"/>
        <dbReference type="ChEBI" id="CHEBI:15377"/>
        <dbReference type="ChEBI" id="CHEBI:49072"/>
        <dbReference type="EC" id="4.2.1.9"/>
    </reaction>
    <physiologicalReaction direction="left-to-right" evidence="1">
        <dbReference type="Rhea" id="RHEA:24810"/>
    </physiologicalReaction>
</comment>
<comment type="catalytic activity">
    <reaction evidence="1">
        <text>(2R,3R)-2,3-dihydroxy-3-methylpentanoate = (S)-3-methyl-2-oxopentanoate + H2O</text>
        <dbReference type="Rhea" id="RHEA:27694"/>
        <dbReference type="ChEBI" id="CHEBI:15377"/>
        <dbReference type="ChEBI" id="CHEBI:35146"/>
        <dbReference type="ChEBI" id="CHEBI:49258"/>
        <dbReference type="EC" id="4.2.1.9"/>
    </reaction>
    <physiologicalReaction direction="left-to-right" evidence="1">
        <dbReference type="Rhea" id="RHEA:27695"/>
    </physiologicalReaction>
</comment>
<comment type="cofactor">
    <cofactor evidence="1">
        <name>[2Fe-2S] cluster</name>
        <dbReference type="ChEBI" id="CHEBI:190135"/>
    </cofactor>
    <text evidence="1">Binds 1 [2Fe-2S] cluster per subunit. This cluster acts as a Lewis acid cofactor.</text>
</comment>
<comment type="cofactor">
    <cofactor evidence="1">
        <name>Mg(2+)</name>
        <dbReference type="ChEBI" id="CHEBI:18420"/>
    </cofactor>
</comment>
<comment type="pathway">
    <text evidence="1">Amino-acid biosynthesis; L-isoleucine biosynthesis; L-isoleucine from 2-oxobutanoate: step 3/4.</text>
</comment>
<comment type="pathway">
    <text evidence="1">Amino-acid biosynthesis; L-valine biosynthesis; L-valine from pyruvate: step 3/4.</text>
</comment>
<comment type="subunit">
    <text evidence="1">Homodimer.</text>
</comment>
<comment type="similarity">
    <text evidence="1">Belongs to the IlvD/Edd family.</text>
</comment>
<gene>
    <name evidence="1" type="primary">ilvD</name>
    <name type="ordered locus">CFF8240_1752</name>
</gene>
<protein>
    <recommendedName>
        <fullName evidence="1">Dihydroxy-acid dehydratase</fullName>
        <shortName evidence="1">DAD</shortName>
        <ecNumber evidence="1">4.2.1.9</ecNumber>
    </recommendedName>
</protein>
<keyword id="KW-0001">2Fe-2S</keyword>
<keyword id="KW-0028">Amino-acid biosynthesis</keyword>
<keyword id="KW-0100">Branched-chain amino acid biosynthesis</keyword>
<keyword id="KW-0408">Iron</keyword>
<keyword id="KW-0411">Iron-sulfur</keyword>
<keyword id="KW-0456">Lyase</keyword>
<keyword id="KW-0460">Magnesium</keyword>
<keyword id="KW-0479">Metal-binding</keyword>
<accession>A0RRN7</accession>
<proteinExistence type="inferred from homology"/>
<dbReference type="EC" id="4.2.1.9" evidence="1"/>
<dbReference type="EMBL" id="CP000487">
    <property type="protein sequence ID" value="ABK83070.1"/>
    <property type="molecule type" value="Genomic_DNA"/>
</dbReference>
<dbReference type="RefSeq" id="WP_002850874.1">
    <property type="nucleotide sequence ID" value="NC_008599.1"/>
</dbReference>
<dbReference type="SMR" id="A0RRN7"/>
<dbReference type="GeneID" id="61065562"/>
<dbReference type="KEGG" id="cff:CFF8240_1752"/>
<dbReference type="eggNOG" id="COG0129">
    <property type="taxonomic scope" value="Bacteria"/>
</dbReference>
<dbReference type="HOGENOM" id="CLU_014271_4_2_7"/>
<dbReference type="UniPathway" id="UPA00047">
    <property type="reaction ID" value="UER00057"/>
</dbReference>
<dbReference type="UniPathway" id="UPA00049">
    <property type="reaction ID" value="UER00061"/>
</dbReference>
<dbReference type="Proteomes" id="UP000000760">
    <property type="component" value="Chromosome"/>
</dbReference>
<dbReference type="GO" id="GO:0005829">
    <property type="term" value="C:cytosol"/>
    <property type="evidence" value="ECO:0007669"/>
    <property type="project" value="TreeGrafter"/>
</dbReference>
<dbReference type="GO" id="GO:0051537">
    <property type="term" value="F:2 iron, 2 sulfur cluster binding"/>
    <property type="evidence" value="ECO:0007669"/>
    <property type="project" value="UniProtKB-UniRule"/>
</dbReference>
<dbReference type="GO" id="GO:0004160">
    <property type="term" value="F:dihydroxy-acid dehydratase activity"/>
    <property type="evidence" value="ECO:0007669"/>
    <property type="project" value="UniProtKB-UniRule"/>
</dbReference>
<dbReference type="GO" id="GO:0000287">
    <property type="term" value="F:magnesium ion binding"/>
    <property type="evidence" value="ECO:0007669"/>
    <property type="project" value="UniProtKB-UniRule"/>
</dbReference>
<dbReference type="GO" id="GO:0009097">
    <property type="term" value="P:isoleucine biosynthetic process"/>
    <property type="evidence" value="ECO:0007669"/>
    <property type="project" value="UniProtKB-UniRule"/>
</dbReference>
<dbReference type="GO" id="GO:0009099">
    <property type="term" value="P:L-valine biosynthetic process"/>
    <property type="evidence" value="ECO:0007669"/>
    <property type="project" value="UniProtKB-UniRule"/>
</dbReference>
<dbReference type="FunFam" id="3.50.30.80:FF:000001">
    <property type="entry name" value="Dihydroxy-acid dehydratase"/>
    <property type="match status" value="1"/>
</dbReference>
<dbReference type="Gene3D" id="3.50.30.80">
    <property type="entry name" value="IlvD/EDD C-terminal domain-like"/>
    <property type="match status" value="1"/>
</dbReference>
<dbReference type="HAMAP" id="MF_00012">
    <property type="entry name" value="IlvD"/>
    <property type="match status" value="1"/>
</dbReference>
<dbReference type="InterPro" id="IPR042096">
    <property type="entry name" value="Dihydro-acid_dehy_C"/>
</dbReference>
<dbReference type="InterPro" id="IPR004404">
    <property type="entry name" value="DihydroxyA_deHydtase"/>
</dbReference>
<dbReference type="InterPro" id="IPR020558">
    <property type="entry name" value="DiOHA_6PGluconate_deHydtase_CS"/>
</dbReference>
<dbReference type="InterPro" id="IPR056740">
    <property type="entry name" value="ILV_EDD_C"/>
</dbReference>
<dbReference type="InterPro" id="IPR000581">
    <property type="entry name" value="ILV_EDD_N"/>
</dbReference>
<dbReference type="InterPro" id="IPR037237">
    <property type="entry name" value="IlvD/EDD_N"/>
</dbReference>
<dbReference type="NCBIfam" id="TIGR00110">
    <property type="entry name" value="ilvD"/>
    <property type="match status" value="1"/>
</dbReference>
<dbReference type="NCBIfam" id="NF002068">
    <property type="entry name" value="PRK00911.1"/>
    <property type="match status" value="1"/>
</dbReference>
<dbReference type="PANTHER" id="PTHR43661">
    <property type="entry name" value="D-XYLONATE DEHYDRATASE"/>
    <property type="match status" value="1"/>
</dbReference>
<dbReference type="PANTHER" id="PTHR43661:SF3">
    <property type="entry name" value="D-XYLONATE DEHYDRATASE YAGF-RELATED"/>
    <property type="match status" value="1"/>
</dbReference>
<dbReference type="Pfam" id="PF24877">
    <property type="entry name" value="ILV_EDD_C"/>
    <property type="match status" value="1"/>
</dbReference>
<dbReference type="Pfam" id="PF00920">
    <property type="entry name" value="ILVD_EDD_N"/>
    <property type="match status" value="1"/>
</dbReference>
<dbReference type="SUPFAM" id="SSF143975">
    <property type="entry name" value="IlvD/EDD N-terminal domain-like"/>
    <property type="match status" value="1"/>
</dbReference>
<dbReference type="SUPFAM" id="SSF52016">
    <property type="entry name" value="LeuD/IlvD-like"/>
    <property type="match status" value="1"/>
</dbReference>
<dbReference type="PROSITE" id="PS00886">
    <property type="entry name" value="ILVD_EDD_1"/>
    <property type="match status" value="1"/>
</dbReference>
<dbReference type="PROSITE" id="PS00887">
    <property type="entry name" value="ILVD_EDD_2"/>
    <property type="match status" value="1"/>
</dbReference>